<comment type="function">
    <text evidence="1 2 3">Binds to both sense and antisense RNA (By similarity). Can also bind sheared DNA and dodecamer DNA with a low affinity (By similarity). Interacts with mesophyll plasmodesmata to mediate its own cell-to-cell transport and potentiate RNA trafficking (By similarity). May play a role in plant defense signaling (By similarity).</text>
</comment>
<comment type="cofactor">
    <cofactor evidence="4">
        <name>Ca(2+)</name>
        <dbReference type="ChEBI" id="CHEBI:29108"/>
    </cofactor>
</comment>
<comment type="alternative products">
    <event type="alternative splicing"/>
    <isoform>
        <id>Q9C8S6-1</id>
        <name>1</name>
        <sequence type="displayed"/>
    </isoform>
    <text>A number of isoforms are produced. According to EST sequences.</text>
</comment>
<name>PP16B_ARATH</name>
<gene>
    <name evidence="6" type="primary">PP16-2</name>
    <name evidence="8" type="ordered locus">At1g63220</name>
    <name evidence="9" type="ORF">F9N12.16</name>
</gene>
<dbReference type="EMBL" id="AC022355">
    <property type="protein sequence ID" value="AAG52148.1"/>
    <property type="molecule type" value="Genomic_DNA"/>
</dbReference>
<dbReference type="EMBL" id="CP002684">
    <property type="protein sequence ID" value="AEE34071.1"/>
    <property type="molecule type" value="Genomic_DNA"/>
</dbReference>
<dbReference type="EMBL" id="AY054623">
    <property type="protein sequence ID" value="AAK96814.1"/>
    <property type="molecule type" value="mRNA"/>
</dbReference>
<dbReference type="EMBL" id="AY081504">
    <property type="protein sequence ID" value="AAM10066.1"/>
    <property type="molecule type" value="mRNA"/>
</dbReference>
<dbReference type="EMBL" id="AY085843">
    <property type="protein sequence ID" value="AAM63058.1"/>
    <property type="molecule type" value="mRNA"/>
</dbReference>
<dbReference type="PIR" id="H96657">
    <property type="entry name" value="H96657"/>
</dbReference>
<dbReference type="RefSeq" id="NP_176511.1">
    <molecule id="Q9C8S6-1"/>
    <property type="nucleotide sequence ID" value="NM_105001.4"/>
</dbReference>
<dbReference type="PDB" id="1WFJ">
    <property type="method" value="NMR"/>
    <property type="chains" value="A=2-124"/>
</dbReference>
<dbReference type="PDBsum" id="1WFJ"/>
<dbReference type="BMRB" id="Q9C8S6"/>
<dbReference type="SMR" id="Q9C8S6"/>
<dbReference type="FunCoup" id="Q9C8S6">
    <property type="interactions" value="66"/>
</dbReference>
<dbReference type="STRING" id="3702.Q9C8S6"/>
<dbReference type="PaxDb" id="3702-AT1G63220.1"/>
<dbReference type="ProteomicsDB" id="242387">
    <molecule id="Q9C8S6-1"/>
</dbReference>
<dbReference type="EnsemblPlants" id="AT1G63220.1">
    <molecule id="Q9C8S6-1"/>
    <property type="protein sequence ID" value="AT1G63220.1"/>
    <property type="gene ID" value="AT1G63220"/>
</dbReference>
<dbReference type="GeneID" id="842627"/>
<dbReference type="Gramene" id="AT1G63220.1">
    <molecule id="Q9C8S6-1"/>
    <property type="protein sequence ID" value="AT1G63220.1"/>
    <property type="gene ID" value="AT1G63220"/>
</dbReference>
<dbReference type="KEGG" id="ath:AT1G63220"/>
<dbReference type="Araport" id="AT1G63220"/>
<dbReference type="TAIR" id="AT1G63220"/>
<dbReference type="eggNOG" id="KOG1030">
    <property type="taxonomic scope" value="Eukaryota"/>
</dbReference>
<dbReference type="HOGENOM" id="CLU_109145_1_0_1"/>
<dbReference type="InParanoid" id="Q9C8S6"/>
<dbReference type="OMA" id="IPITCYN"/>
<dbReference type="OrthoDB" id="419768at2759"/>
<dbReference type="PhylomeDB" id="Q9C8S6"/>
<dbReference type="EvolutionaryTrace" id="Q9C8S6"/>
<dbReference type="PRO" id="PR:Q9C8S6"/>
<dbReference type="Proteomes" id="UP000006548">
    <property type="component" value="Chromosome 1"/>
</dbReference>
<dbReference type="ExpressionAtlas" id="Q9C8S6">
    <property type="expression patterns" value="baseline and differential"/>
</dbReference>
<dbReference type="GO" id="GO:0046872">
    <property type="term" value="F:metal ion binding"/>
    <property type="evidence" value="ECO:0007669"/>
    <property type="project" value="UniProtKB-KW"/>
</dbReference>
<dbReference type="GO" id="GO:0003723">
    <property type="term" value="F:RNA binding"/>
    <property type="evidence" value="ECO:0007669"/>
    <property type="project" value="UniProtKB-KW"/>
</dbReference>
<dbReference type="GO" id="GO:0006952">
    <property type="term" value="P:defense response"/>
    <property type="evidence" value="ECO:0007669"/>
    <property type="project" value="UniProtKB-KW"/>
</dbReference>
<dbReference type="Gene3D" id="2.60.40.150">
    <property type="entry name" value="C2 domain"/>
    <property type="match status" value="1"/>
</dbReference>
<dbReference type="InterPro" id="IPR000008">
    <property type="entry name" value="C2_dom"/>
</dbReference>
<dbReference type="InterPro" id="IPR035892">
    <property type="entry name" value="C2_domain_sf"/>
</dbReference>
<dbReference type="PANTHER" id="PTHR46502:SF2">
    <property type="entry name" value="16 KDA PHLOEM PROTEIN 2"/>
    <property type="match status" value="1"/>
</dbReference>
<dbReference type="PANTHER" id="PTHR46502">
    <property type="entry name" value="C2 DOMAIN-CONTAINING"/>
    <property type="match status" value="1"/>
</dbReference>
<dbReference type="Pfam" id="PF00168">
    <property type="entry name" value="C2"/>
    <property type="match status" value="1"/>
</dbReference>
<dbReference type="SMART" id="SM00239">
    <property type="entry name" value="C2"/>
    <property type="match status" value="1"/>
</dbReference>
<dbReference type="SUPFAM" id="SSF49562">
    <property type="entry name" value="C2 domain (Calcium/lipid-binding domain, CaLB)"/>
    <property type="match status" value="1"/>
</dbReference>
<dbReference type="PROSITE" id="PS50004">
    <property type="entry name" value="C2"/>
    <property type="match status" value="1"/>
</dbReference>
<accession>Q9C8S6</accession>
<accession>Q8LDR6</accession>
<protein>
    <recommendedName>
        <fullName evidence="6">16 kDa phloem protein 2</fullName>
        <shortName evidence="6">AtPP16-2</shortName>
        <shortName evidence="6">Phloem protein 16-2</shortName>
    </recommendedName>
</protein>
<organism>
    <name type="scientific">Arabidopsis thaliana</name>
    <name type="common">Mouse-ear cress</name>
    <dbReference type="NCBI Taxonomy" id="3702"/>
    <lineage>
        <taxon>Eukaryota</taxon>
        <taxon>Viridiplantae</taxon>
        <taxon>Streptophyta</taxon>
        <taxon>Embryophyta</taxon>
        <taxon>Tracheophyta</taxon>
        <taxon>Spermatophyta</taxon>
        <taxon>Magnoliopsida</taxon>
        <taxon>eudicotyledons</taxon>
        <taxon>Gunneridae</taxon>
        <taxon>Pentapetalae</taxon>
        <taxon>rosids</taxon>
        <taxon>malvids</taxon>
        <taxon>Brassicales</taxon>
        <taxon>Brassicaceae</taxon>
        <taxon>Camelineae</taxon>
        <taxon>Arabidopsis</taxon>
    </lineage>
</organism>
<proteinExistence type="evidence at protein level"/>
<feature type="chain" id="PRO_0000220593" description="16 kDa phloem protein 2">
    <location>
        <begin position="1"/>
        <end position="147"/>
    </location>
</feature>
<feature type="domain" description="C2" evidence="4">
    <location>
        <begin position="1"/>
        <end position="103"/>
    </location>
</feature>
<feature type="region of interest" description="Disordered" evidence="5">
    <location>
        <begin position="126"/>
        <end position="147"/>
    </location>
</feature>
<feature type="binding site" evidence="4">
    <location>
        <position position="20"/>
    </location>
    <ligand>
        <name>Ca(2+)</name>
        <dbReference type="ChEBI" id="CHEBI:29108"/>
        <label>1</label>
    </ligand>
</feature>
<feature type="binding site" evidence="4">
    <location>
        <position position="20"/>
    </location>
    <ligand>
        <name>Ca(2+)</name>
        <dbReference type="ChEBI" id="CHEBI:29108"/>
        <label>2</label>
    </ligand>
</feature>
<feature type="binding site" evidence="4">
    <location>
        <position position="26"/>
    </location>
    <ligand>
        <name>Ca(2+)</name>
        <dbReference type="ChEBI" id="CHEBI:29108"/>
        <label>1</label>
    </ligand>
</feature>
<feature type="binding site" evidence="4">
    <location>
        <position position="73"/>
    </location>
    <ligand>
        <name>Ca(2+)</name>
        <dbReference type="ChEBI" id="CHEBI:29108"/>
        <label>1</label>
    </ligand>
</feature>
<feature type="binding site" evidence="4">
    <location>
        <position position="73"/>
    </location>
    <ligand>
        <name>Ca(2+)</name>
        <dbReference type="ChEBI" id="CHEBI:29108"/>
        <label>2</label>
    </ligand>
</feature>
<feature type="binding site" evidence="4">
    <location>
        <position position="75"/>
    </location>
    <ligand>
        <name>Ca(2+)</name>
        <dbReference type="ChEBI" id="CHEBI:29108"/>
        <label>1</label>
    </ligand>
</feature>
<feature type="binding site" evidence="4">
    <location>
        <position position="75"/>
    </location>
    <ligand>
        <name>Ca(2+)</name>
        <dbReference type="ChEBI" id="CHEBI:29108"/>
        <label>2</label>
    </ligand>
</feature>
<feature type="binding site" evidence="4">
    <location>
        <position position="81"/>
    </location>
    <ligand>
        <name>Ca(2+)</name>
        <dbReference type="ChEBI" id="CHEBI:29108"/>
        <label>2</label>
    </ligand>
</feature>
<feature type="sequence conflict" description="In Ref. 4; AAM63058." evidence="7" ref="4">
    <original>E</original>
    <variation>G</variation>
    <location>
        <position position="126"/>
    </location>
</feature>
<feature type="strand" evidence="10">
    <location>
        <begin position="3"/>
        <end position="15"/>
    </location>
</feature>
<feature type="strand" evidence="10">
    <location>
        <begin position="29"/>
        <end position="35"/>
    </location>
</feature>
<feature type="strand" evidence="10">
    <location>
        <begin position="37"/>
        <end position="39"/>
    </location>
</feature>
<feature type="strand" evidence="10">
    <location>
        <begin position="51"/>
        <end position="63"/>
    </location>
</feature>
<feature type="strand" evidence="10">
    <location>
        <begin position="66"/>
        <end position="71"/>
    </location>
</feature>
<feature type="strand" evidence="10">
    <location>
        <begin position="74"/>
        <end position="76"/>
    </location>
</feature>
<feature type="turn" evidence="10">
    <location>
        <begin position="78"/>
        <end position="80"/>
    </location>
</feature>
<feature type="strand" evidence="10">
    <location>
        <begin position="83"/>
        <end position="90"/>
    </location>
</feature>
<feature type="helix" evidence="10">
    <location>
        <begin position="91"/>
        <end position="96"/>
    </location>
</feature>
<feature type="strand" evidence="10">
    <location>
        <begin position="97"/>
        <end position="108"/>
    </location>
</feature>
<feature type="strand" evidence="10">
    <location>
        <begin position="111"/>
        <end position="124"/>
    </location>
</feature>
<sequence>MPHGTLEVVLVSAKGLEDADFLNNMDPYVQLTCRTQDQKSNVAEGMGTTPEWNETFIFTVSEGTTELKAKIFDKDVGTEDDAVGEATIPLEPVFVEGSIPPTAYNVVKDEEYKGEIWVALSFKPSENRSRGMDEESYGGWKNSEASY</sequence>
<keyword id="KW-0002">3D-structure</keyword>
<keyword id="KW-0025">Alternative splicing</keyword>
<keyword id="KW-0106">Calcium</keyword>
<keyword id="KW-0479">Metal-binding</keyword>
<keyword id="KW-0611">Plant defense</keyword>
<keyword id="KW-1185">Reference proteome</keyword>
<keyword id="KW-0694">RNA-binding</keyword>
<keyword id="KW-0813">Transport</keyword>
<reference key="1">
    <citation type="journal article" date="2000" name="Nature">
        <title>Sequence and analysis of chromosome 1 of the plant Arabidopsis thaliana.</title>
        <authorList>
            <person name="Theologis A."/>
            <person name="Ecker J.R."/>
            <person name="Palm C.J."/>
            <person name="Federspiel N.A."/>
            <person name="Kaul S."/>
            <person name="White O."/>
            <person name="Alonso J."/>
            <person name="Altafi H."/>
            <person name="Araujo R."/>
            <person name="Bowman C.L."/>
            <person name="Brooks S.Y."/>
            <person name="Buehler E."/>
            <person name="Chan A."/>
            <person name="Chao Q."/>
            <person name="Chen H."/>
            <person name="Cheuk R.F."/>
            <person name="Chin C.W."/>
            <person name="Chung M.K."/>
            <person name="Conn L."/>
            <person name="Conway A.B."/>
            <person name="Conway A.R."/>
            <person name="Creasy T.H."/>
            <person name="Dewar K."/>
            <person name="Dunn P."/>
            <person name="Etgu P."/>
            <person name="Feldblyum T.V."/>
            <person name="Feng J.-D."/>
            <person name="Fong B."/>
            <person name="Fujii C.Y."/>
            <person name="Gill J.E."/>
            <person name="Goldsmith A.D."/>
            <person name="Haas B."/>
            <person name="Hansen N.F."/>
            <person name="Hughes B."/>
            <person name="Huizar L."/>
            <person name="Hunter J.L."/>
            <person name="Jenkins J."/>
            <person name="Johnson-Hopson C."/>
            <person name="Khan S."/>
            <person name="Khaykin E."/>
            <person name="Kim C.J."/>
            <person name="Koo H.L."/>
            <person name="Kremenetskaia I."/>
            <person name="Kurtz D.B."/>
            <person name="Kwan A."/>
            <person name="Lam B."/>
            <person name="Langin-Hooper S."/>
            <person name="Lee A."/>
            <person name="Lee J.M."/>
            <person name="Lenz C.A."/>
            <person name="Li J.H."/>
            <person name="Li Y.-P."/>
            <person name="Lin X."/>
            <person name="Liu S.X."/>
            <person name="Liu Z.A."/>
            <person name="Luros J.S."/>
            <person name="Maiti R."/>
            <person name="Marziali A."/>
            <person name="Militscher J."/>
            <person name="Miranda M."/>
            <person name="Nguyen M."/>
            <person name="Nierman W.C."/>
            <person name="Osborne B.I."/>
            <person name="Pai G."/>
            <person name="Peterson J."/>
            <person name="Pham P.K."/>
            <person name="Rizzo M."/>
            <person name="Rooney T."/>
            <person name="Rowley D."/>
            <person name="Sakano H."/>
            <person name="Salzberg S.L."/>
            <person name="Schwartz J.R."/>
            <person name="Shinn P."/>
            <person name="Southwick A.M."/>
            <person name="Sun H."/>
            <person name="Tallon L.J."/>
            <person name="Tambunga G."/>
            <person name="Toriumi M.J."/>
            <person name="Town C.D."/>
            <person name="Utterback T."/>
            <person name="Van Aken S."/>
            <person name="Vaysberg M."/>
            <person name="Vysotskaia V.S."/>
            <person name="Walker M."/>
            <person name="Wu D."/>
            <person name="Yu G."/>
            <person name="Fraser C.M."/>
            <person name="Venter J.C."/>
            <person name="Davis R.W."/>
        </authorList>
    </citation>
    <scope>NUCLEOTIDE SEQUENCE [LARGE SCALE GENOMIC DNA]</scope>
    <source>
        <strain>cv. Columbia</strain>
    </source>
</reference>
<reference key="2">
    <citation type="journal article" date="2017" name="Plant J.">
        <title>Araport11: a complete reannotation of the Arabidopsis thaliana reference genome.</title>
        <authorList>
            <person name="Cheng C.Y."/>
            <person name="Krishnakumar V."/>
            <person name="Chan A.P."/>
            <person name="Thibaud-Nissen F."/>
            <person name="Schobel S."/>
            <person name="Town C.D."/>
        </authorList>
    </citation>
    <scope>GENOME REANNOTATION</scope>
    <source>
        <strain>cv. Columbia</strain>
    </source>
</reference>
<reference key="3">
    <citation type="journal article" date="2003" name="Science">
        <title>Empirical analysis of transcriptional activity in the Arabidopsis genome.</title>
        <authorList>
            <person name="Yamada K."/>
            <person name="Lim J."/>
            <person name="Dale J.M."/>
            <person name="Chen H."/>
            <person name="Shinn P."/>
            <person name="Palm C.J."/>
            <person name="Southwick A.M."/>
            <person name="Wu H.C."/>
            <person name="Kim C.J."/>
            <person name="Nguyen M."/>
            <person name="Pham P.K."/>
            <person name="Cheuk R.F."/>
            <person name="Karlin-Newmann G."/>
            <person name="Liu S.X."/>
            <person name="Lam B."/>
            <person name="Sakano H."/>
            <person name="Wu T."/>
            <person name="Yu G."/>
            <person name="Miranda M."/>
            <person name="Quach H.L."/>
            <person name="Tripp M."/>
            <person name="Chang C.H."/>
            <person name="Lee J.M."/>
            <person name="Toriumi M.J."/>
            <person name="Chan M.M."/>
            <person name="Tang C.C."/>
            <person name="Onodera C.S."/>
            <person name="Deng J.M."/>
            <person name="Akiyama K."/>
            <person name="Ansari Y."/>
            <person name="Arakawa T."/>
            <person name="Banh J."/>
            <person name="Banno F."/>
            <person name="Bowser L."/>
            <person name="Brooks S.Y."/>
            <person name="Carninci P."/>
            <person name="Chao Q."/>
            <person name="Choy N."/>
            <person name="Enju A."/>
            <person name="Goldsmith A.D."/>
            <person name="Gurjal M."/>
            <person name="Hansen N.F."/>
            <person name="Hayashizaki Y."/>
            <person name="Johnson-Hopson C."/>
            <person name="Hsuan V.W."/>
            <person name="Iida K."/>
            <person name="Karnes M."/>
            <person name="Khan S."/>
            <person name="Koesema E."/>
            <person name="Ishida J."/>
            <person name="Jiang P.X."/>
            <person name="Jones T."/>
            <person name="Kawai J."/>
            <person name="Kamiya A."/>
            <person name="Meyers C."/>
            <person name="Nakajima M."/>
            <person name="Narusaka M."/>
            <person name="Seki M."/>
            <person name="Sakurai T."/>
            <person name="Satou M."/>
            <person name="Tamse R."/>
            <person name="Vaysberg M."/>
            <person name="Wallender E.K."/>
            <person name="Wong C."/>
            <person name="Yamamura Y."/>
            <person name="Yuan S."/>
            <person name="Shinozaki K."/>
            <person name="Davis R.W."/>
            <person name="Theologis A."/>
            <person name="Ecker J.R."/>
        </authorList>
    </citation>
    <scope>NUCLEOTIDE SEQUENCE [LARGE SCALE MRNA]</scope>
    <source>
        <strain>cv. Columbia</strain>
    </source>
</reference>
<reference key="4">
    <citation type="submission" date="2002-03" db="EMBL/GenBank/DDBJ databases">
        <title>Full-length cDNA from Arabidopsis thaliana.</title>
        <authorList>
            <person name="Brover V.V."/>
            <person name="Troukhan M.E."/>
            <person name="Alexandrov N.A."/>
            <person name="Lu Y.-P."/>
            <person name="Flavell R.B."/>
            <person name="Feldmann K.A."/>
        </authorList>
    </citation>
    <scope>NUCLEOTIDE SEQUENCE [LARGE SCALE MRNA]</scope>
</reference>
<reference key="5">
    <citation type="journal article" date="2018" name="Biochemistry">
        <title>Solution NMR structure and backbone dynamics of partially disordered Arabidopsis thaliana phloem protein 16-1, a putative mRNA transporter.</title>
        <authorList>
            <person name="Sashi P."/>
            <person name="Singarapu K.K."/>
            <person name="Bhuyan A.K."/>
        </authorList>
    </citation>
    <scope>FUNCTION</scope>
    <scope>NOMENCLATURE</scope>
</reference>
<reference key="6">
    <citation type="submission" date="2004-11" db="PDB data bank">
        <title>C2 domain-containing protein from putative elicitor-responsive gene.</title>
        <authorList>
            <consortium name="RIKEN structural genomics initiative (RSGI)"/>
        </authorList>
    </citation>
    <scope>STRUCTURE BY NMR OF 2-125</scope>
</reference>
<evidence type="ECO:0000250" key="1">
    <source>
        <dbReference type="UniProtKB" id="Q0JHU5"/>
    </source>
</evidence>
<evidence type="ECO:0000250" key="2">
    <source>
        <dbReference type="UniProtKB" id="Q9M2T2"/>
    </source>
</evidence>
<evidence type="ECO:0000250" key="3">
    <source>
        <dbReference type="UniProtKB" id="Q9ZT47"/>
    </source>
</evidence>
<evidence type="ECO:0000255" key="4">
    <source>
        <dbReference type="PROSITE-ProRule" id="PRU00041"/>
    </source>
</evidence>
<evidence type="ECO:0000256" key="5">
    <source>
        <dbReference type="SAM" id="MobiDB-lite"/>
    </source>
</evidence>
<evidence type="ECO:0000303" key="6">
    <source>
    </source>
</evidence>
<evidence type="ECO:0000305" key="7"/>
<evidence type="ECO:0000312" key="8">
    <source>
        <dbReference type="Araport" id="AT1G63220"/>
    </source>
</evidence>
<evidence type="ECO:0000312" key="9">
    <source>
        <dbReference type="EMBL" id="AAG52148.1"/>
    </source>
</evidence>
<evidence type="ECO:0007829" key="10">
    <source>
        <dbReference type="PDB" id="1WFJ"/>
    </source>
</evidence>